<reference key="1">
    <citation type="journal article" date="1996" name="Endocrinology">
        <title>Cloning and characterization of human urocortin.</title>
        <authorList>
            <person name="Donaldson C.J."/>
            <person name="Sutton S.W."/>
            <person name="Perrin M.H."/>
            <person name="Corrigan A.Z."/>
            <person name="Lewis K.A."/>
            <person name="Rivier J.E."/>
            <person name="Vaughan J.M."/>
            <person name="Vale W.W."/>
        </authorList>
    </citation>
    <scope>NUCLEOTIDE SEQUENCE [GENOMIC DNA]</scope>
    <scope>FUNCTION</scope>
    <source>
        <tissue>Placenta</tissue>
    </source>
</reference>
<reference key="2">
    <citation type="journal article" date="1998" name="Genomics">
        <title>The structures of the mouse and human urocortin genes (Ucn and UCN).</title>
        <authorList>
            <person name="Zhao L."/>
            <person name="Donaldson C.J."/>
            <person name="Smith G.W."/>
            <person name="Vale W.W."/>
        </authorList>
    </citation>
    <scope>NUCLEOTIDE SEQUENCE [GENOMIC DNA]</scope>
</reference>
<reference key="3">
    <citation type="submission" date="2004-06" db="EMBL/GenBank/DDBJ databases">
        <title>Cloning of human full open reading frames in Gateway(TM) system entry vector (pDONR201).</title>
        <authorList>
            <person name="Halleck A."/>
            <person name="Ebert L."/>
            <person name="Mkoundinya M."/>
            <person name="Schick M."/>
            <person name="Eisenstein S."/>
            <person name="Neubert P."/>
            <person name="Kstrang K."/>
            <person name="Schatten R."/>
            <person name="Shen B."/>
            <person name="Henze S."/>
            <person name="Mar W."/>
            <person name="Korn B."/>
            <person name="Zuo D."/>
            <person name="Hu Y."/>
            <person name="LaBaer J."/>
        </authorList>
    </citation>
    <scope>NUCLEOTIDE SEQUENCE [LARGE SCALE MRNA]</scope>
</reference>
<reference key="4">
    <citation type="journal article" date="2005" name="Nature">
        <title>Generation and annotation of the DNA sequences of human chromosomes 2 and 4.</title>
        <authorList>
            <person name="Hillier L.W."/>
            <person name="Graves T.A."/>
            <person name="Fulton R.S."/>
            <person name="Fulton L.A."/>
            <person name="Pepin K.H."/>
            <person name="Minx P."/>
            <person name="Wagner-McPherson C."/>
            <person name="Layman D."/>
            <person name="Wylie K."/>
            <person name="Sekhon M."/>
            <person name="Becker M.C."/>
            <person name="Fewell G.A."/>
            <person name="Delehaunty K.D."/>
            <person name="Miner T.L."/>
            <person name="Nash W.E."/>
            <person name="Kremitzki C."/>
            <person name="Oddy L."/>
            <person name="Du H."/>
            <person name="Sun H."/>
            <person name="Bradshaw-Cordum H."/>
            <person name="Ali J."/>
            <person name="Carter J."/>
            <person name="Cordes M."/>
            <person name="Harris A."/>
            <person name="Isak A."/>
            <person name="van Brunt A."/>
            <person name="Nguyen C."/>
            <person name="Du F."/>
            <person name="Courtney L."/>
            <person name="Kalicki J."/>
            <person name="Ozersky P."/>
            <person name="Abbott S."/>
            <person name="Armstrong J."/>
            <person name="Belter E.A."/>
            <person name="Caruso L."/>
            <person name="Cedroni M."/>
            <person name="Cotton M."/>
            <person name="Davidson T."/>
            <person name="Desai A."/>
            <person name="Elliott G."/>
            <person name="Erb T."/>
            <person name="Fronick C."/>
            <person name="Gaige T."/>
            <person name="Haakenson W."/>
            <person name="Haglund K."/>
            <person name="Holmes A."/>
            <person name="Harkins R."/>
            <person name="Kim K."/>
            <person name="Kruchowski S.S."/>
            <person name="Strong C.M."/>
            <person name="Grewal N."/>
            <person name="Goyea E."/>
            <person name="Hou S."/>
            <person name="Levy A."/>
            <person name="Martinka S."/>
            <person name="Mead K."/>
            <person name="McLellan M.D."/>
            <person name="Meyer R."/>
            <person name="Randall-Maher J."/>
            <person name="Tomlinson C."/>
            <person name="Dauphin-Kohlberg S."/>
            <person name="Kozlowicz-Reilly A."/>
            <person name="Shah N."/>
            <person name="Swearengen-Shahid S."/>
            <person name="Snider J."/>
            <person name="Strong J.T."/>
            <person name="Thompson J."/>
            <person name="Yoakum M."/>
            <person name="Leonard S."/>
            <person name="Pearman C."/>
            <person name="Trani L."/>
            <person name="Radionenko M."/>
            <person name="Waligorski J.E."/>
            <person name="Wang C."/>
            <person name="Rock S.M."/>
            <person name="Tin-Wollam A.-M."/>
            <person name="Maupin R."/>
            <person name="Latreille P."/>
            <person name="Wendl M.C."/>
            <person name="Yang S.-P."/>
            <person name="Pohl C."/>
            <person name="Wallis J.W."/>
            <person name="Spieth J."/>
            <person name="Bieri T.A."/>
            <person name="Berkowicz N."/>
            <person name="Nelson J.O."/>
            <person name="Osborne J."/>
            <person name="Ding L."/>
            <person name="Meyer R."/>
            <person name="Sabo A."/>
            <person name="Shotland Y."/>
            <person name="Sinha P."/>
            <person name="Wohldmann P.E."/>
            <person name="Cook L.L."/>
            <person name="Hickenbotham M.T."/>
            <person name="Eldred J."/>
            <person name="Williams D."/>
            <person name="Jones T.A."/>
            <person name="She X."/>
            <person name="Ciccarelli F.D."/>
            <person name="Izaurralde E."/>
            <person name="Taylor J."/>
            <person name="Schmutz J."/>
            <person name="Myers R.M."/>
            <person name="Cox D.R."/>
            <person name="Huang X."/>
            <person name="McPherson J.D."/>
            <person name="Mardis E.R."/>
            <person name="Clifton S.W."/>
            <person name="Warren W.C."/>
            <person name="Chinwalla A.T."/>
            <person name="Eddy S.R."/>
            <person name="Marra M.A."/>
            <person name="Ovcharenko I."/>
            <person name="Furey T.S."/>
            <person name="Miller W."/>
            <person name="Eichler E.E."/>
            <person name="Bork P."/>
            <person name="Suyama M."/>
            <person name="Torrents D."/>
            <person name="Waterston R.H."/>
            <person name="Wilson R.K."/>
        </authorList>
    </citation>
    <scope>NUCLEOTIDE SEQUENCE [LARGE SCALE GENOMIC DNA]</scope>
</reference>
<reference key="5">
    <citation type="journal article" date="2004" name="Genome Res.">
        <title>The status, quality, and expansion of the NIH full-length cDNA project: the Mammalian Gene Collection (MGC).</title>
        <authorList>
            <consortium name="The MGC Project Team"/>
        </authorList>
    </citation>
    <scope>NUCLEOTIDE SEQUENCE [LARGE SCALE MRNA]</scope>
</reference>
<reference key="6">
    <citation type="journal article" date="2000" name="J. Clin. Endocrinol. Metab.">
        <title>The skin produces urocortin.</title>
        <authorList>
            <person name="Slominski A."/>
            <person name="Roloff B."/>
            <person name="Curry J."/>
            <person name="Dahiya M."/>
            <person name="Szczesniewski A."/>
            <person name="Wortsman J."/>
        </authorList>
    </citation>
    <scope>TISSUE SPECIFICITY</scope>
    <scope>IDENTIFICATION BY MASS SPECTROMETRY</scope>
</reference>
<reference key="7">
    <citation type="journal article" date="2004" name="J. Clin. Endocrinol. Metab.">
        <title>Urocortin 1 in colonic mucosa in patients with ulcerative colitis.</title>
        <authorList>
            <person name="Saruta M."/>
            <person name="Takahashi K."/>
            <person name="Suzuki T."/>
            <person name="Torii A."/>
            <person name="Kawakami M."/>
            <person name="Sasano H."/>
        </authorList>
    </citation>
    <scope>TISSUE SPECIFICITY</scope>
    <scope>ASSOCIATION WITH INFLAMMATION IN ULCERATIVE COLITIS</scope>
</reference>
<reference key="8">
    <citation type="journal article" date="2007" name="J. Am. Chem. Soc.">
        <title>Common and divergent structural features of a series of corticotropin releasing factor-related peptides.</title>
        <authorList>
            <person name="Grace C.R.R."/>
            <person name="Perrin M.H."/>
            <person name="Cantle J.P."/>
            <person name="Vale W.W."/>
            <person name="Rivier J.E."/>
            <person name="Riek R."/>
        </authorList>
    </citation>
    <scope>STRUCTURE BY NMR OF 83-122</scope>
</reference>
<reference key="9">
    <citation type="journal article" date="2010" name="J. Biol. Chem.">
        <title>Structural basis for hormone recognition by the Human CRFR2{alpha} G protein-coupled receptor.</title>
        <authorList>
            <person name="Pal K."/>
            <person name="Swaminathan K."/>
            <person name="Xu H.E."/>
            <person name="Pioszak A.A."/>
        </authorList>
    </citation>
    <scope>X-RAY CRYSTALLOGRAPHY (2.75 ANGSTROMS) OF 107-122 IN COMPLEX WITH CRHR2</scope>
    <scope>MUTAGENESIS OF ARG-116; ILE-118; PHE-119 AND VAL-122</scope>
    <scope>INTERACTION WITH CRHR2 AND CRHR1</scope>
</reference>
<dbReference type="EMBL" id="AF038633">
    <property type="protein sequence ID" value="AAC24204.1"/>
    <property type="molecule type" value="Genomic_DNA"/>
</dbReference>
<dbReference type="EMBL" id="CR542244">
    <property type="protein sequence ID" value="CAG47040.1"/>
    <property type="molecule type" value="mRNA"/>
</dbReference>
<dbReference type="EMBL" id="AC013413">
    <property type="protein sequence ID" value="AAY24297.1"/>
    <property type="molecule type" value="Genomic_DNA"/>
</dbReference>
<dbReference type="EMBL" id="BC104470">
    <property type="protein sequence ID" value="AAI04471.1"/>
    <property type="molecule type" value="mRNA"/>
</dbReference>
<dbReference type="EMBL" id="BC104471">
    <property type="protein sequence ID" value="AAI04472.1"/>
    <property type="molecule type" value="mRNA"/>
</dbReference>
<dbReference type="CCDS" id="CCDS1747.1"/>
<dbReference type="RefSeq" id="NP_003344.1">
    <property type="nucleotide sequence ID" value="NM_003353.4"/>
</dbReference>
<dbReference type="PDB" id="2RMF">
    <property type="method" value="NMR"/>
    <property type="chains" value="A=83-122"/>
</dbReference>
<dbReference type="PDB" id="3N96">
    <property type="method" value="X-ray"/>
    <property type="resolution" value="2.75 A"/>
    <property type="chains" value="E/F/G/H=107-122"/>
</dbReference>
<dbReference type="PDB" id="6PB0">
    <property type="method" value="EM"/>
    <property type="resolution" value="3.00 A"/>
    <property type="chains" value="U=83-122"/>
</dbReference>
<dbReference type="PDB" id="6PB1">
    <property type="method" value="EM"/>
    <property type="resolution" value="2.80 A"/>
    <property type="chains" value="U=83-122"/>
</dbReference>
<dbReference type="PDB" id="7TRY">
    <property type="method" value="EM"/>
    <property type="resolution" value="3.70 A"/>
    <property type="chains" value="U=83-122"/>
</dbReference>
<dbReference type="PDB" id="7TS0">
    <property type="method" value="EM"/>
    <property type="resolution" value="2.80 A"/>
    <property type="chains" value="U=83-122"/>
</dbReference>
<dbReference type="PDBsum" id="2RMF"/>
<dbReference type="PDBsum" id="3N96"/>
<dbReference type="PDBsum" id="6PB0"/>
<dbReference type="PDBsum" id="6PB1"/>
<dbReference type="PDBsum" id="7TRY"/>
<dbReference type="PDBsum" id="7TS0"/>
<dbReference type="EMDB" id="EMD-20284"/>
<dbReference type="EMDB" id="EMD-20285"/>
<dbReference type="EMDB" id="EMD-26103"/>
<dbReference type="EMDB" id="EMD-26104"/>
<dbReference type="SMR" id="P55089"/>
<dbReference type="BioGRID" id="113196">
    <property type="interactions" value="5"/>
</dbReference>
<dbReference type="CORUM" id="P55089"/>
<dbReference type="FunCoup" id="P55089">
    <property type="interactions" value="489"/>
</dbReference>
<dbReference type="IntAct" id="P55089">
    <property type="interactions" value="2"/>
</dbReference>
<dbReference type="STRING" id="9606.ENSP00000296099"/>
<dbReference type="BioMuta" id="UCN"/>
<dbReference type="DMDM" id="1718059"/>
<dbReference type="jPOST" id="P55089"/>
<dbReference type="MassIVE" id="P55089"/>
<dbReference type="PaxDb" id="9606-ENSP00000296099"/>
<dbReference type="PeptideAtlas" id="P55089"/>
<dbReference type="ProteomicsDB" id="56790"/>
<dbReference type="Antibodypedia" id="4400">
    <property type="antibodies" value="210 antibodies from 32 providers"/>
</dbReference>
<dbReference type="DNASU" id="7349"/>
<dbReference type="Ensembl" id="ENST00000296099.2">
    <property type="protein sequence ID" value="ENSP00000296099.2"/>
    <property type="gene ID" value="ENSG00000163794.6"/>
</dbReference>
<dbReference type="GeneID" id="7349"/>
<dbReference type="KEGG" id="hsa:7349"/>
<dbReference type="MANE-Select" id="ENST00000296099.2">
    <property type="protein sequence ID" value="ENSP00000296099.2"/>
    <property type="RefSeq nucleotide sequence ID" value="NM_003353.4"/>
    <property type="RefSeq protein sequence ID" value="NP_003344.1"/>
</dbReference>
<dbReference type="UCSC" id="uc002rjp.2">
    <property type="organism name" value="human"/>
</dbReference>
<dbReference type="AGR" id="HGNC:12516"/>
<dbReference type="CTD" id="7349"/>
<dbReference type="DisGeNET" id="7349"/>
<dbReference type="GeneCards" id="UCN"/>
<dbReference type="HGNC" id="HGNC:12516">
    <property type="gene designation" value="UCN"/>
</dbReference>
<dbReference type="HPA" id="ENSG00000163794">
    <property type="expression patterns" value="Tissue enhanced (brain)"/>
</dbReference>
<dbReference type="MalaCards" id="UCN"/>
<dbReference type="MIM" id="600945">
    <property type="type" value="gene"/>
</dbReference>
<dbReference type="neXtProt" id="NX_P55089"/>
<dbReference type="OpenTargets" id="ENSG00000163794"/>
<dbReference type="PharmGKB" id="PA37163"/>
<dbReference type="VEuPathDB" id="HostDB:ENSG00000163794"/>
<dbReference type="eggNOG" id="ENOG502S63E">
    <property type="taxonomic scope" value="Eukaryota"/>
</dbReference>
<dbReference type="GeneTree" id="ENSGT00940000154473"/>
<dbReference type="HOGENOM" id="CLU_138901_0_0_1"/>
<dbReference type="InParanoid" id="P55089"/>
<dbReference type="OMA" id="QNRIVFD"/>
<dbReference type="PAN-GO" id="P55089">
    <property type="GO annotations" value="1 GO annotation based on evolutionary models"/>
</dbReference>
<dbReference type="PhylomeDB" id="P55089"/>
<dbReference type="TreeFam" id="TF332956"/>
<dbReference type="PathwayCommons" id="P55089"/>
<dbReference type="Reactome" id="R-HSA-373080">
    <property type="pathway name" value="Class B/2 (Secretin family receptors)"/>
</dbReference>
<dbReference type="Reactome" id="R-HSA-422085">
    <property type="pathway name" value="Synthesis, secretion, and deacylation of Ghrelin"/>
</dbReference>
<dbReference type="SignaLink" id="P55089"/>
<dbReference type="SIGNOR" id="P55089"/>
<dbReference type="BioGRID-ORCS" id="7349">
    <property type="hits" value="28 hits in 1143 CRISPR screens"/>
</dbReference>
<dbReference type="EvolutionaryTrace" id="P55089"/>
<dbReference type="GeneWiki" id="Urocortin"/>
<dbReference type="GenomeRNAi" id="7349"/>
<dbReference type="Pharos" id="P55089">
    <property type="development level" value="Tbio"/>
</dbReference>
<dbReference type="PRO" id="PR:P55089"/>
<dbReference type="Proteomes" id="UP000005640">
    <property type="component" value="Chromosome 2"/>
</dbReference>
<dbReference type="RNAct" id="P55089">
    <property type="molecule type" value="protein"/>
</dbReference>
<dbReference type="Bgee" id="ENSG00000163794">
    <property type="expression patterns" value="Expressed in middle temporal gyrus and 96 other cell types or tissues"/>
</dbReference>
<dbReference type="GO" id="GO:0043679">
    <property type="term" value="C:axon terminus"/>
    <property type="evidence" value="ECO:0007669"/>
    <property type="project" value="Ensembl"/>
</dbReference>
<dbReference type="GO" id="GO:0030425">
    <property type="term" value="C:dendrite"/>
    <property type="evidence" value="ECO:0007669"/>
    <property type="project" value="Ensembl"/>
</dbReference>
<dbReference type="GO" id="GO:0005576">
    <property type="term" value="C:extracellular region"/>
    <property type="evidence" value="ECO:0000304"/>
    <property type="project" value="Reactome"/>
</dbReference>
<dbReference type="GO" id="GO:0043204">
    <property type="term" value="C:perikaryon"/>
    <property type="evidence" value="ECO:0007669"/>
    <property type="project" value="Ensembl"/>
</dbReference>
<dbReference type="GO" id="GO:0043196">
    <property type="term" value="C:varicosity"/>
    <property type="evidence" value="ECO:0007669"/>
    <property type="project" value="Ensembl"/>
</dbReference>
<dbReference type="GO" id="GO:0051430">
    <property type="term" value="F:corticotropin-releasing hormone receptor 1 binding"/>
    <property type="evidence" value="ECO:0007669"/>
    <property type="project" value="Ensembl"/>
</dbReference>
<dbReference type="GO" id="GO:0051431">
    <property type="term" value="F:corticotropin-releasing hormone receptor 2 binding"/>
    <property type="evidence" value="ECO:0007669"/>
    <property type="project" value="Ensembl"/>
</dbReference>
<dbReference type="GO" id="GO:0046811">
    <property type="term" value="F:histone deacetylase inhibitor activity"/>
    <property type="evidence" value="ECO:0007669"/>
    <property type="project" value="Ensembl"/>
</dbReference>
<dbReference type="GO" id="GO:0005184">
    <property type="term" value="F:neuropeptide hormone activity"/>
    <property type="evidence" value="ECO:0000304"/>
    <property type="project" value="ProtInc"/>
</dbReference>
<dbReference type="GO" id="GO:0009060">
    <property type="term" value="P:aerobic respiration"/>
    <property type="evidence" value="ECO:0007669"/>
    <property type="project" value="Ensembl"/>
</dbReference>
<dbReference type="GO" id="GO:0008306">
    <property type="term" value="P:associative learning"/>
    <property type="evidence" value="ECO:0007669"/>
    <property type="project" value="Ensembl"/>
</dbReference>
<dbReference type="GO" id="GO:0042756">
    <property type="term" value="P:drinking behavior"/>
    <property type="evidence" value="ECO:0007669"/>
    <property type="project" value="Ensembl"/>
</dbReference>
<dbReference type="GO" id="GO:0007565">
    <property type="term" value="P:female pregnancy"/>
    <property type="evidence" value="ECO:0007669"/>
    <property type="project" value="Ensembl"/>
</dbReference>
<dbReference type="GO" id="GO:0007186">
    <property type="term" value="P:G protein-coupled receptor signaling pathway"/>
    <property type="evidence" value="ECO:0000304"/>
    <property type="project" value="ProtInc"/>
</dbReference>
<dbReference type="GO" id="GO:0032099">
    <property type="term" value="P:negative regulation of appetite"/>
    <property type="evidence" value="ECO:0007669"/>
    <property type="project" value="Ensembl"/>
</dbReference>
<dbReference type="GO" id="GO:0045776">
    <property type="term" value="P:negative regulation of blood pressure"/>
    <property type="evidence" value="ECO:0007669"/>
    <property type="project" value="Ensembl"/>
</dbReference>
<dbReference type="GO" id="GO:0045792">
    <property type="term" value="P:negative regulation of cell size"/>
    <property type="evidence" value="ECO:0007669"/>
    <property type="project" value="Ensembl"/>
</dbReference>
<dbReference type="GO" id="GO:2000252">
    <property type="term" value="P:negative regulation of feeding behavior"/>
    <property type="evidence" value="ECO:0000318"/>
    <property type="project" value="GO_Central"/>
</dbReference>
<dbReference type="GO" id="GO:0010629">
    <property type="term" value="P:negative regulation of gene expression"/>
    <property type="evidence" value="ECO:0007669"/>
    <property type="project" value="Ensembl"/>
</dbReference>
<dbReference type="GO" id="GO:0046888">
    <property type="term" value="P:negative regulation of hormone secretion"/>
    <property type="evidence" value="ECO:0007669"/>
    <property type="project" value="Ensembl"/>
</dbReference>
<dbReference type="GO" id="GO:0043524">
    <property type="term" value="P:negative regulation of neuron apoptotic process"/>
    <property type="evidence" value="ECO:0007669"/>
    <property type="project" value="Ensembl"/>
</dbReference>
<dbReference type="GO" id="GO:0031175">
    <property type="term" value="P:neuron projection development"/>
    <property type="evidence" value="ECO:0007669"/>
    <property type="project" value="Ensembl"/>
</dbReference>
<dbReference type="GO" id="GO:0007218">
    <property type="term" value="P:neuropeptide signaling pathway"/>
    <property type="evidence" value="ECO:0007669"/>
    <property type="project" value="Ensembl"/>
</dbReference>
<dbReference type="GO" id="GO:2000987">
    <property type="term" value="P:positive regulation of behavioral fear response"/>
    <property type="evidence" value="ECO:0007669"/>
    <property type="project" value="Ensembl"/>
</dbReference>
<dbReference type="GO" id="GO:0090280">
    <property type="term" value="P:positive regulation of calcium ion import"/>
    <property type="evidence" value="ECO:0007669"/>
    <property type="project" value="Ensembl"/>
</dbReference>
<dbReference type="GO" id="GO:0141163">
    <property type="term" value="P:positive regulation of cAMP/PKA signal transduction"/>
    <property type="evidence" value="ECO:0007669"/>
    <property type="project" value="Ensembl"/>
</dbReference>
<dbReference type="GO" id="GO:0060452">
    <property type="term" value="P:positive regulation of cardiac muscle contraction"/>
    <property type="evidence" value="ECO:0007669"/>
    <property type="project" value="Ensembl"/>
</dbReference>
<dbReference type="GO" id="GO:0030307">
    <property type="term" value="P:positive regulation of cell growth"/>
    <property type="evidence" value="ECO:0007669"/>
    <property type="project" value="Ensembl"/>
</dbReference>
<dbReference type="GO" id="GO:0032967">
    <property type="term" value="P:positive regulation of collagen biosynthetic process"/>
    <property type="evidence" value="ECO:0007669"/>
    <property type="project" value="Ensembl"/>
</dbReference>
<dbReference type="GO" id="GO:0051461">
    <property type="term" value="P:positive regulation of corticotropin secretion"/>
    <property type="evidence" value="ECO:0000314"/>
    <property type="project" value="UniProtKB"/>
</dbReference>
<dbReference type="GO" id="GO:0045740">
    <property type="term" value="P:positive regulation of DNA replication"/>
    <property type="evidence" value="ECO:0007669"/>
    <property type="project" value="Ensembl"/>
</dbReference>
<dbReference type="GO" id="GO:0032755">
    <property type="term" value="P:positive regulation of interleukin-6 production"/>
    <property type="evidence" value="ECO:0007669"/>
    <property type="project" value="Ensembl"/>
</dbReference>
<dbReference type="GO" id="GO:0045944">
    <property type="term" value="P:positive regulation of transcription by RNA polymerase II"/>
    <property type="evidence" value="ECO:0007669"/>
    <property type="project" value="Ensembl"/>
</dbReference>
<dbReference type="GO" id="GO:0045727">
    <property type="term" value="P:positive regulation of translation"/>
    <property type="evidence" value="ECO:0007669"/>
    <property type="project" value="Ensembl"/>
</dbReference>
<dbReference type="GO" id="GO:0043117">
    <property type="term" value="P:positive regulation of vascular permeability"/>
    <property type="evidence" value="ECO:0007669"/>
    <property type="project" value="Ensembl"/>
</dbReference>
<dbReference type="GO" id="GO:0051966">
    <property type="term" value="P:regulation of synaptic transmission, glutamatergic"/>
    <property type="evidence" value="ECO:0007669"/>
    <property type="project" value="Ensembl"/>
</dbReference>
<dbReference type="GO" id="GO:0010996">
    <property type="term" value="P:response to auditory stimulus"/>
    <property type="evidence" value="ECO:0007669"/>
    <property type="project" value="Ensembl"/>
</dbReference>
<dbReference type="GO" id="GO:0032355">
    <property type="term" value="P:response to estradiol"/>
    <property type="evidence" value="ECO:0007669"/>
    <property type="project" value="Ensembl"/>
</dbReference>
<dbReference type="GO" id="GO:0051384">
    <property type="term" value="P:response to glucocorticoid"/>
    <property type="evidence" value="ECO:0007669"/>
    <property type="project" value="Ensembl"/>
</dbReference>
<dbReference type="GO" id="GO:0006979">
    <property type="term" value="P:response to oxidative stress"/>
    <property type="evidence" value="ECO:0007669"/>
    <property type="project" value="Ensembl"/>
</dbReference>
<dbReference type="GO" id="GO:0048265">
    <property type="term" value="P:response to pain"/>
    <property type="evidence" value="ECO:0007669"/>
    <property type="project" value="Ensembl"/>
</dbReference>
<dbReference type="GO" id="GO:0007605">
    <property type="term" value="P:sensory perception of sound"/>
    <property type="evidence" value="ECO:0007669"/>
    <property type="project" value="UniProtKB-KW"/>
</dbReference>
<dbReference type="GO" id="GO:0035176">
    <property type="term" value="P:social behavior"/>
    <property type="evidence" value="ECO:0007669"/>
    <property type="project" value="Ensembl"/>
</dbReference>
<dbReference type="GO" id="GO:0001964">
    <property type="term" value="P:startle response"/>
    <property type="evidence" value="ECO:0007669"/>
    <property type="project" value="Ensembl"/>
</dbReference>
<dbReference type="GO" id="GO:0042311">
    <property type="term" value="P:vasodilation"/>
    <property type="evidence" value="ECO:0007669"/>
    <property type="project" value="Ensembl"/>
</dbReference>
<dbReference type="Gene3D" id="6.10.250.1920">
    <property type="match status" value="1"/>
</dbReference>
<dbReference type="InterPro" id="IPR018446">
    <property type="entry name" value="Corticotropin-releasing_fac_CS"/>
</dbReference>
<dbReference type="InterPro" id="IPR000187">
    <property type="entry name" value="CRF"/>
</dbReference>
<dbReference type="InterPro" id="IPR003620">
    <property type="entry name" value="Urocortin_CRF"/>
</dbReference>
<dbReference type="PANTHER" id="PTHR15035">
    <property type="entry name" value="CORTICOLIBERIN/UROCORTIN"/>
    <property type="match status" value="1"/>
</dbReference>
<dbReference type="PANTHER" id="PTHR15035:SF11">
    <property type="entry name" value="UROCORTIN"/>
    <property type="match status" value="1"/>
</dbReference>
<dbReference type="Pfam" id="PF00473">
    <property type="entry name" value="CRF"/>
    <property type="match status" value="1"/>
</dbReference>
<dbReference type="PRINTS" id="PR01612">
    <property type="entry name" value="CRFFAMILY"/>
</dbReference>
<dbReference type="SMART" id="SM00039">
    <property type="entry name" value="CRF"/>
    <property type="match status" value="1"/>
</dbReference>
<dbReference type="PROSITE" id="PS00511">
    <property type="entry name" value="CRF"/>
    <property type="match status" value="1"/>
</dbReference>
<feature type="signal peptide" evidence="4">
    <location>
        <begin position="1"/>
        <end position="25"/>
    </location>
</feature>
<feature type="propeptide" id="PRO_0000006233">
    <location>
        <begin position="26"/>
        <end position="82"/>
    </location>
</feature>
<feature type="peptide" id="PRO_0000006234" description="Urocortin">
    <location>
        <begin position="83"/>
        <end position="122"/>
    </location>
</feature>
<feature type="region of interest" description="Disordered" evidence="5">
    <location>
        <begin position="23"/>
        <end position="46"/>
    </location>
</feature>
<feature type="modified residue" description="Valine amide" evidence="1">
    <location>
        <position position="122"/>
    </location>
</feature>
<feature type="mutagenesis site" description="Reduced affinity for CRHR1." evidence="8">
    <original>R</original>
    <variation>A</variation>
    <location>
        <position position="116"/>
    </location>
</feature>
<feature type="mutagenesis site" description="Reduced affinity for CRHR2." evidence="8">
    <original>I</original>
    <variation>A</variation>
    <location>
        <position position="118"/>
    </location>
</feature>
<feature type="mutagenesis site" description="Strongly reduced affinity for CRHR2." evidence="8">
    <original>F</original>
    <variation>A</variation>
    <location>
        <position position="119"/>
    </location>
</feature>
<feature type="mutagenesis site" description="Reduced affinity for CRHR2." evidence="8">
    <original>V</original>
    <variation>A</variation>
    <location>
        <position position="122"/>
    </location>
</feature>
<feature type="helix" evidence="11">
    <location>
        <begin position="108"/>
        <end position="121"/>
    </location>
</feature>
<proteinExistence type="evidence at protein level"/>
<gene>
    <name type="primary">UCN</name>
</gene>
<evidence type="ECO:0000250" key="1"/>
<evidence type="ECO:0000250" key="2">
    <source>
        <dbReference type="UniProtKB" id="P55090"/>
    </source>
</evidence>
<evidence type="ECO:0000250" key="3">
    <source>
        <dbReference type="UniProtKB" id="P81615"/>
    </source>
</evidence>
<evidence type="ECO:0000255" key="4"/>
<evidence type="ECO:0000256" key="5">
    <source>
        <dbReference type="SAM" id="MobiDB-lite"/>
    </source>
</evidence>
<evidence type="ECO:0000269" key="6">
    <source>
    </source>
</evidence>
<evidence type="ECO:0000269" key="7">
    <source>
    </source>
</evidence>
<evidence type="ECO:0000269" key="8">
    <source>
    </source>
</evidence>
<evidence type="ECO:0000269" key="9">
    <source>
    </source>
</evidence>
<evidence type="ECO:0000305" key="10"/>
<evidence type="ECO:0007829" key="11">
    <source>
        <dbReference type="PDB" id="3N96"/>
    </source>
</evidence>
<accession>P55089</accession>
<accession>Q6FG64</accession>
<keyword id="KW-0002">3D-structure</keyword>
<keyword id="KW-0027">Amidation</keyword>
<keyword id="KW-0165">Cleavage on pair of basic residues</keyword>
<keyword id="KW-1009">Hearing</keyword>
<keyword id="KW-0372">Hormone</keyword>
<keyword id="KW-1185">Reference proteome</keyword>
<keyword id="KW-0964">Secreted</keyword>
<keyword id="KW-0732">Signal</keyword>
<protein>
    <recommendedName>
        <fullName>Urocortin</fullName>
    </recommendedName>
</protein>
<organism>
    <name type="scientific">Homo sapiens</name>
    <name type="common">Human</name>
    <dbReference type="NCBI Taxonomy" id="9606"/>
    <lineage>
        <taxon>Eukaryota</taxon>
        <taxon>Metazoa</taxon>
        <taxon>Chordata</taxon>
        <taxon>Craniata</taxon>
        <taxon>Vertebrata</taxon>
        <taxon>Euteleostomi</taxon>
        <taxon>Mammalia</taxon>
        <taxon>Eutheria</taxon>
        <taxon>Euarchontoglires</taxon>
        <taxon>Primates</taxon>
        <taxon>Haplorrhini</taxon>
        <taxon>Catarrhini</taxon>
        <taxon>Hominidae</taxon>
        <taxon>Homo</taxon>
    </lineage>
</organism>
<sequence length="124" mass="13458">MRQAGRAALLAALLLLVQLCPGSSQRSPEAAGVQDPSLRWSPGARNQGGGARALLLLLAERFPRRAGPGRLGLGTAGERPRRDNPSLSIDLTFHLLRTLLELARTQSQRERAEQNRIIFDSVGK</sequence>
<comment type="function">
    <text evidence="2 3 9">Acts in vitro to stimulate the secretion of adrenocorticotropic hormone (ACTH) (PubMed:8612563). Binds with high affinity to CRF receptor types 1, 2-alpha, and 2-beta (PubMed:8612563). Plays a role in the establishment of normal hearing thresholds (By similarity). Reduces food intake and regulates ghrelin levels in gastric body and plasma (By similarity).</text>
</comment>
<comment type="subunit">
    <text evidence="8">Interacts with CRHR1 and CRHR2 (via their N-terminal extracellular domain).</text>
</comment>
<comment type="subcellular location">
    <subcellularLocation>
        <location>Secreted</location>
    </subcellularLocation>
</comment>
<comment type="tissue specificity">
    <text evidence="6 7">Keratinocytes in epidermis and the outer and inner root sheaths of hair follicles, epithelium of sebaceous and sweat glands, erector pili muscle, cutaneous blood vessel walls, cutaneous nerves and dermal mononuclear cells (PubMed:10690896). Detected in plasma cells in the lamia propria in colon mucosa (PubMed:15531481) (at protein level). Expressed in pituitary and adrenal glands (PubMed:10690896). Detected in plasma cells in the lamia propria in colon mucosa (PubMed:15531481).</text>
</comment>
<comment type="miscellaneous">
    <text evidence="7">Positive correlation between increased expression in colonic lamina propria and severity of inflammation in patients with ulcerative colitis.</text>
</comment>
<comment type="similarity">
    <text evidence="10">Belongs to the sauvagine/corticotropin-releasing factor/urotensin I family.</text>
</comment>
<name>UCN1_HUMAN</name>